<name>ALR_HELPG</name>
<reference key="1">
    <citation type="journal article" date="2009" name="J. Bacteriol.">
        <title>The complete genome sequence of Helicobacter pylori strain G27.</title>
        <authorList>
            <person name="Baltrus D.A."/>
            <person name="Amieva M.R."/>
            <person name="Covacci A."/>
            <person name="Lowe T.M."/>
            <person name="Merrell D.S."/>
            <person name="Ottemann K.M."/>
            <person name="Stein M."/>
            <person name="Salama N.R."/>
            <person name="Guillemin K."/>
        </authorList>
    </citation>
    <scope>NUCLEOTIDE SEQUENCE [LARGE SCALE GENOMIC DNA]</scope>
    <source>
        <strain>G27</strain>
    </source>
</reference>
<feature type="chain" id="PRO_1000138602" description="Alanine racemase">
    <location>
        <begin position="1"/>
        <end position="377"/>
    </location>
</feature>
<feature type="active site" description="Proton acceptor; specific for D-alanine" evidence="1">
    <location>
        <position position="37"/>
    </location>
</feature>
<feature type="active site" description="Proton acceptor; specific for L-alanine" evidence="1">
    <location>
        <position position="271"/>
    </location>
</feature>
<feature type="binding site" evidence="1">
    <location>
        <position position="135"/>
    </location>
    <ligand>
        <name>substrate</name>
    </ligand>
</feature>
<feature type="binding site" evidence="1">
    <location>
        <position position="319"/>
    </location>
    <ligand>
        <name>substrate</name>
    </ligand>
</feature>
<feature type="modified residue" description="N6-(pyridoxal phosphate)lysine" evidence="1">
    <location>
        <position position="37"/>
    </location>
</feature>
<comment type="function">
    <text evidence="1">Catalyzes the interconversion of L-alanine and D-alanine. May also act on other amino acids.</text>
</comment>
<comment type="catalytic activity">
    <reaction evidence="1">
        <text>L-alanine = D-alanine</text>
        <dbReference type="Rhea" id="RHEA:20249"/>
        <dbReference type="ChEBI" id="CHEBI:57416"/>
        <dbReference type="ChEBI" id="CHEBI:57972"/>
        <dbReference type="EC" id="5.1.1.1"/>
    </reaction>
</comment>
<comment type="cofactor">
    <cofactor evidence="1">
        <name>pyridoxal 5'-phosphate</name>
        <dbReference type="ChEBI" id="CHEBI:597326"/>
    </cofactor>
</comment>
<comment type="pathway">
    <text evidence="1">Amino-acid biosynthesis; D-alanine biosynthesis; D-alanine from L-alanine: step 1/1.</text>
</comment>
<comment type="similarity">
    <text evidence="1">Belongs to the alanine racemase family.</text>
</comment>
<sequence length="377" mass="41888">MLKRASFVEVDTASLRHNFSAVKSIVPKDAHIMAVVKANAYGAGAIKASEIFLQEGANYLGVAALDEALELRSHFPKTPILILGYSPNTNASMLIDNDLSAMIFSLEQAEVFSQMALKSQKRLKIHLKIDTGMHRLGLEPNFKSIEIIKKIRALKGLEIEGIFTHLSNADAKIKTHAKNQMKAFNAFLEQLLDQKIEFQYRHAYNSAGILSLCNGNENRLLNLYRPGIMLYGFYPSNEMKESCPTILKNVISLKAQIVQIRSVKKGEFIGYGEHFYTNEETLVGVLALGYADGLMRALGNRIQVAINNQLAPLIGKVCMDQCFVKLNDIQAKEGDEVILFGDKSARANDASEIAALLNTIAYETISTLSKRLERVYI</sequence>
<accession>B5Z7U5</accession>
<evidence type="ECO:0000255" key="1">
    <source>
        <dbReference type="HAMAP-Rule" id="MF_01201"/>
    </source>
</evidence>
<dbReference type="EC" id="5.1.1.1" evidence="1"/>
<dbReference type="EMBL" id="CP001173">
    <property type="protein sequence ID" value="ACI27644.1"/>
    <property type="molecule type" value="Genomic_DNA"/>
</dbReference>
<dbReference type="RefSeq" id="WP_000917919.1">
    <property type="nucleotide sequence ID" value="NC_011333.1"/>
</dbReference>
<dbReference type="SMR" id="B5Z7U5"/>
<dbReference type="KEGG" id="hpg:HPG27_890"/>
<dbReference type="HOGENOM" id="CLU_028393_2_2_7"/>
<dbReference type="UniPathway" id="UPA00042">
    <property type="reaction ID" value="UER00497"/>
</dbReference>
<dbReference type="Proteomes" id="UP000001735">
    <property type="component" value="Chromosome"/>
</dbReference>
<dbReference type="GO" id="GO:0005829">
    <property type="term" value="C:cytosol"/>
    <property type="evidence" value="ECO:0007669"/>
    <property type="project" value="TreeGrafter"/>
</dbReference>
<dbReference type="GO" id="GO:0008784">
    <property type="term" value="F:alanine racemase activity"/>
    <property type="evidence" value="ECO:0007669"/>
    <property type="project" value="UniProtKB-UniRule"/>
</dbReference>
<dbReference type="GO" id="GO:0030170">
    <property type="term" value="F:pyridoxal phosphate binding"/>
    <property type="evidence" value="ECO:0007669"/>
    <property type="project" value="UniProtKB-UniRule"/>
</dbReference>
<dbReference type="GO" id="GO:0030632">
    <property type="term" value="P:D-alanine biosynthetic process"/>
    <property type="evidence" value="ECO:0007669"/>
    <property type="project" value="UniProtKB-UniRule"/>
</dbReference>
<dbReference type="CDD" id="cd00430">
    <property type="entry name" value="PLPDE_III_AR"/>
    <property type="match status" value="1"/>
</dbReference>
<dbReference type="FunFam" id="3.20.20.10:FF:000002">
    <property type="entry name" value="Alanine racemase"/>
    <property type="match status" value="1"/>
</dbReference>
<dbReference type="Gene3D" id="3.20.20.10">
    <property type="entry name" value="Alanine racemase"/>
    <property type="match status" value="1"/>
</dbReference>
<dbReference type="Gene3D" id="2.40.37.10">
    <property type="entry name" value="Lyase, Ornithine Decarboxylase, Chain A, domain 1"/>
    <property type="match status" value="1"/>
</dbReference>
<dbReference type="HAMAP" id="MF_01201">
    <property type="entry name" value="Ala_racemase"/>
    <property type="match status" value="1"/>
</dbReference>
<dbReference type="InterPro" id="IPR000821">
    <property type="entry name" value="Ala_racemase"/>
</dbReference>
<dbReference type="InterPro" id="IPR009006">
    <property type="entry name" value="Ala_racemase/Decarboxylase_C"/>
</dbReference>
<dbReference type="InterPro" id="IPR011079">
    <property type="entry name" value="Ala_racemase_C"/>
</dbReference>
<dbReference type="InterPro" id="IPR001608">
    <property type="entry name" value="Ala_racemase_N"/>
</dbReference>
<dbReference type="InterPro" id="IPR020622">
    <property type="entry name" value="Ala_racemase_pyridoxalP-BS"/>
</dbReference>
<dbReference type="InterPro" id="IPR029066">
    <property type="entry name" value="PLP-binding_barrel"/>
</dbReference>
<dbReference type="NCBIfam" id="TIGR00492">
    <property type="entry name" value="alr"/>
    <property type="match status" value="1"/>
</dbReference>
<dbReference type="PANTHER" id="PTHR30511">
    <property type="entry name" value="ALANINE RACEMASE"/>
    <property type="match status" value="1"/>
</dbReference>
<dbReference type="PANTHER" id="PTHR30511:SF0">
    <property type="entry name" value="ALANINE RACEMASE, CATABOLIC-RELATED"/>
    <property type="match status" value="1"/>
</dbReference>
<dbReference type="Pfam" id="PF00842">
    <property type="entry name" value="Ala_racemase_C"/>
    <property type="match status" value="1"/>
</dbReference>
<dbReference type="Pfam" id="PF01168">
    <property type="entry name" value="Ala_racemase_N"/>
    <property type="match status" value="1"/>
</dbReference>
<dbReference type="PRINTS" id="PR00992">
    <property type="entry name" value="ALARACEMASE"/>
</dbReference>
<dbReference type="SMART" id="SM01005">
    <property type="entry name" value="Ala_racemase_C"/>
    <property type="match status" value="1"/>
</dbReference>
<dbReference type="SUPFAM" id="SSF50621">
    <property type="entry name" value="Alanine racemase C-terminal domain-like"/>
    <property type="match status" value="1"/>
</dbReference>
<dbReference type="SUPFAM" id="SSF51419">
    <property type="entry name" value="PLP-binding barrel"/>
    <property type="match status" value="1"/>
</dbReference>
<dbReference type="PROSITE" id="PS00395">
    <property type="entry name" value="ALANINE_RACEMASE"/>
    <property type="match status" value="1"/>
</dbReference>
<organism>
    <name type="scientific">Helicobacter pylori (strain G27)</name>
    <dbReference type="NCBI Taxonomy" id="563041"/>
    <lineage>
        <taxon>Bacteria</taxon>
        <taxon>Pseudomonadati</taxon>
        <taxon>Campylobacterota</taxon>
        <taxon>Epsilonproteobacteria</taxon>
        <taxon>Campylobacterales</taxon>
        <taxon>Helicobacteraceae</taxon>
        <taxon>Helicobacter</taxon>
    </lineage>
</organism>
<keyword id="KW-0413">Isomerase</keyword>
<keyword id="KW-0663">Pyridoxal phosphate</keyword>
<keyword id="KW-1185">Reference proteome</keyword>
<proteinExistence type="inferred from homology"/>
<protein>
    <recommendedName>
        <fullName evidence="1">Alanine racemase</fullName>
        <ecNumber evidence="1">5.1.1.1</ecNumber>
    </recommendedName>
</protein>
<gene>
    <name type="primary">alr</name>
    <name type="ordered locus">HPG27_890</name>
</gene>